<accession>A6VFL2</accession>
<name>RNP4_METM7</name>
<organism>
    <name type="scientific">Methanococcus maripaludis (strain C7 / ATCC BAA-1331)</name>
    <dbReference type="NCBI Taxonomy" id="426368"/>
    <lineage>
        <taxon>Archaea</taxon>
        <taxon>Methanobacteriati</taxon>
        <taxon>Methanobacteriota</taxon>
        <taxon>Methanomada group</taxon>
        <taxon>Methanococci</taxon>
        <taxon>Methanococcales</taxon>
        <taxon>Methanococcaceae</taxon>
        <taxon>Methanococcus</taxon>
    </lineage>
</organism>
<comment type="function">
    <text evidence="1">Part of ribonuclease P, a protein complex that generates mature tRNA molecules by cleaving their 5'-ends.</text>
</comment>
<comment type="catalytic activity">
    <reaction evidence="1">
        <text>Endonucleolytic cleavage of RNA, removing 5'-extranucleotides from tRNA precursor.</text>
        <dbReference type="EC" id="3.1.26.5"/>
    </reaction>
</comment>
<comment type="cofactor">
    <cofactor evidence="1">
        <name>Zn(2+)</name>
        <dbReference type="ChEBI" id="CHEBI:29105"/>
    </cofactor>
    <text evidence="1">Binds 1 zinc ion per subunit.</text>
</comment>
<comment type="subunit">
    <text evidence="1">Consists of a catalytic RNA component and at least 4-5 protein subunits.</text>
</comment>
<comment type="subcellular location">
    <subcellularLocation>
        <location evidence="1">Cytoplasm</location>
    </subcellularLocation>
</comment>
<comment type="similarity">
    <text evidence="1">Belongs to the eukaryotic/archaeal RNase P protein component 4 family.</text>
</comment>
<proteinExistence type="inferred from homology"/>
<feature type="chain" id="PRO_1000046633" description="Ribonuclease P protein component 4">
    <location>
        <begin position="1"/>
        <end position="110"/>
    </location>
</feature>
<feature type="binding site" evidence="1">
    <location>
        <position position="65"/>
    </location>
    <ligand>
        <name>Zn(2+)</name>
        <dbReference type="ChEBI" id="CHEBI:29105"/>
    </ligand>
</feature>
<feature type="binding site" evidence="1">
    <location>
        <position position="68"/>
    </location>
    <ligand>
        <name>Zn(2+)</name>
        <dbReference type="ChEBI" id="CHEBI:29105"/>
    </ligand>
</feature>
<feature type="binding site" evidence="1">
    <location>
        <position position="94"/>
    </location>
    <ligand>
        <name>Zn(2+)</name>
        <dbReference type="ChEBI" id="CHEBI:29105"/>
    </ligand>
</feature>
<feature type="binding site" evidence="1">
    <location>
        <position position="97"/>
    </location>
    <ligand>
        <name>Zn(2+)</name>
        <dbReference type="ChEBI" id="CHEBI:29105"/>
    </ligand>
</feature>
<keyword id="KW-0963">Cytoplasm</keyword>
<keyword id="KW-0255">Endonuclease</keyword>
<keyword id="KW-0378">Hydrolase</keyword>
<keyword id="KW-0479">Metal-binding</keyword>
<keyword id="KW-0540">Nuclease</keyword>
<keyword id="KW-0819">tRNA processing</keyword>
<keyword id="KW-0862">Zinc</keyword>
<dbReference type="EC" id="3.1.26.5" evidence="1"/>
<dbReference type="EMBL" id="CP000745">
    <property type="protein sequence ID" value="ABR65238.1"/>
    <property type="molecule type" value="Genomic_DNA"/>
</dbReference>
<dbReference type="SMR" id="A6VFL2"/>
<dbReference type="STRING" id="426368.MmarC7_0168"/>
<dbReference type="KEGG" id="mmz:MmarC7_0168"/>
<dbReference type="eggNOG" id="arCOG04345">
    <property type="taxonomic scope" value="Archaea"/>
</dbReference>
<dbReference type="HOGENOM" id="CLU_079140_3_1_2"/>
<dbReference type="OrthoDB" id="10058at2157"/>
<dbReference type="GO" id="GO:0005737">
    <property type="term" value="C:cytoplasm"/>
    <property type="evidence" value="ECO:0007669"/>
    <property type="project" value="UniProtKB-SubCell"/>
</dbReference>
<dbReference type="GO" id="GO:0030677">
    <property type="term" value="C:ribonuclease P complex"/>
    <property type="evidence" value="ECO:0007669"/>
    <property type="project" value="UniProtKB-UniRule"/>
</dbReference>
<dbReference type="GO" id="GO:0004526">
    <property type="term" value="F:ribonuclease P activity"/>
    <property type="evidence" value="ECO:0007669"/>
    <property type="project" value="UniProtKB-UniRule"/>
</dbReference>
<dbReference type="GO" id="GO:0008270">
    <property type="term" value="F:zinc ion binding"/>
    <property type="evidence" value="ECO:0007669"/>
    <property type="project" value="UniProtKB-UniRule"/>
</dbReference>
<dbReference type="GO" id="GO:0001682">
    <property type="term" value="P:tRNA 5'-leader removal"/>
    <property type="evidence" value="ECO:0007669"/>
    <property type="project" value="UniProtKB-UniRule"/>
</dbReference>
<dbReference type="Gene3D" id="6.20.50.20">
    <property type="match status" value="1"/>
</dbReference>
<dbReference type="Gene3D" id="1.20.5.420">
    <property type="entry name" value="Immunoglobulin FC, subunit C"/>
    <property type="match status" value="1"/>
</dbReference>
<dbReference type="HAMAP" id="MF_00757">
    <property type="entry name" value="RNase_P_4"/>
    <property type="match status" value="1"/>
</dbReference>
<dbReference type="InterPro" id="IPR016432">
    <property type="entry name" value="RNP4"/>
</dbReference>
<dbReference type="InterPro" id="IPR007175">
    <property type="entry name" value="Rpr2/Snm1/Rpp21"/>
</dbReference>
<dbReference type="PANTHER" id="PTHR14742:SF0">
    <property type="entry name" value="RIBONUCLEASE P PROTEIN SUBUNIT P21"/>
    <property type="match status" value="1"/>
</dbReference>
<dbReference type="PANTHER" id="PTHR14742">
    <property type="entry name" value="RIBONUCLEASE P SUBUNIT P21"/>
    <property type="match status" value="1"/>
</dbReference>
<dbReference type="Pfam" id="PF04032">
    <property type="entry name" value="Rpr2"/>
    <property type="match status" value="1"/>
</dbReference>
<dbReference type="PIRSF" id="PIRSF004878">
    <property type="entry name" value="RNase_P_4"/>
    <property type="match status" value="1"/>
</dbReference>
<evidence type="ECO:0000255" key="1">
    <source>
        <dbReference type="HAMAP-Rule" id="MF_00757"/>
    </source>
</evidence>
<reference key="1">
    <citation type="submission" date="2007-06" db="EMBL/GenBank/DDBJ databases">
        <title>Complete sequence of Methanococcus maripaludis C7.</title>
        <authorList>
            <consortium name="US DOE Joint Genome Institute"/>
            <person name="Copeland A."/>
            <person name="Lucas S."/>
            <person name="Lapidus A."/>
            <person name="Barry K."/>
            <person name="Glavina del Rio T."/>
            <person name="Dalin E."/>
            <person name="Tice H."/>
            <person name="Pitluck S."/>
            <person name="Clum A."/>
            <person name="Schmutz J."/>
            <person name="Larimer F."/>
            <person name="Land M."/>
            <person name="Hauser L."/>
            <person name="Kyrpides N."/>
            <person name="Anderson I."/>
            <person name="Sieprawska-Lupa M."/>
            <person name="Whitman W.B."/>
            <person name="Richardson P."/>
        </authorList>
    </citation>
    <scope>NUCLEOTIDE SEQUENCE [LARGE SCALE GENOMIC DNA]</scope>
    <source>
        <strain>C7 / ATCC BAA-1331</strain>
    </source>
</reference>
<gene>
    <name evidence="1" type="primary">rnp4</name>
    <name type="ordered locus">MmarC7_0168</name>
</gene>
<protein>
    <recommendedName>
        <fullName evidence="1">Ribonuclease P protein component 4</fullName>
        <shortName evidence="1">RNase P component 4</shortName>
        <ecNumber evidence="1">3.1.26.5</ecNumber>
    </recommendedName>
    <alternativeName>
        <fullName evidence="1">Rpp21</fullName>
    </alternativeName>
</protein>
<sequence>MKLKKKFLEKSKKIAEERIDILMNLAEKESKDGKTDRSKNYVVLGKKIAMRMRMPYPKEWKRRICKNCGSFLIYGKNSRVRTKAKNYPHVVITCLECNSITRIPIKTEKK</sequence>